<sequence length="228" mass="25934">MAMLLQVALPLLAAVSWGWELNENDDSLAKIIEGCEWTSRQNVISEILLDRYRKYAMYNFFLLDDVCAVHEWNKNLKEPEFSENNEAEDKSPTSAQNTQEHIPGNNFPPPAASNPPVNSSCAKSAKDFFICLSNQLGDPTLNAMLLDNLEVACDPRFSPVSAIQKRNSKYVSKQKFYSWGGKRNNPNVFYPWGGKRNTGRVHRQPKVVIRNPFHAWGGKRNQKDDNVF</sequence>
<organism>
    <name type="scientific">Aedes aegypti</name>
    <name type="common">Yellowfever mosquito</name>
    <name type="synonym">Culex aegypti</name>
    <dbReference type="NCBI Taxonomy" id="7159"/>
    <lineage>
        <taxon>Eukaryota</taxon>
        <taxon>Metazoa</taxon>
        <taxon>Ecdysozoa</taxon>
        <taxon>Arthropoda</taxon>
        <taxon>Hexapoda</taxon>
        <taxon>Insecta</taxon>
        <taxon>Pterygota</taxon>
        <taxon>Neoptera</taxon>
        <taxon>Endopterygota</taxon>
        <taxon>Diptera</taxon>
        <taxon>Nematocera</taxon>
        <taxon>Culicoidea</taxon>
        <taxon>Culicidae</taxon>
        <taxon>Culicinae</taxon>
        <taxon>Aedini</taxon>
        <taxon>Aedes</taxon>
        <taxon>Stegomyia</taxon>
    </lineage>
</organism>
<gene>
    <name type="ORF">AAEL010172</name>
</gene>
<proteinExistence type="evidence at protein level"/>
<comment type="function">
    <text evidence="4">Stimulates both fluid secretion by the Malpighian tubules and hindgut contractions. Depolarize the transepithelial voltage of the Malpighian tubules in concentrations of less than 10(-9) M and increase the frequency of hindgut contractions at concentrations above 10(-8) M.</text>
</comment>
<comment type="subcellular location">
    <subcellularLocation>
        <location evidence="4">Secreted</location>
    </subcellularLocation>
</comment>
<dbReference type="EMBL" id="U66832">
    <property type="protein sequence ID" value="AAC47656.1"/>
    <property type="molecule type" value="mRNA"/>
</dbReference>
<dbReference type="EMBL" id="CH477643">
    <property type="protein sequence ID" value="EAT37886.1"/>
    <property type="molecule type" value="Genomic_DNA"/>
</dbReference>
<dbReference type="RefSeq" id="XP_001654286.1">
    <property type="nucleotide sequence ID" value="XM_001654236.1"/>
</dbReference>
<dbReference type="FunCoup" id="O02036">
    <property type="interactions" value="43"/>
</dbReference>
<dbReference type="STRING" id="7159.O02036"/>
<dbReference type="PaxDb" id="7159-AAEL010172-PA"/>
<dbReference type="GeneID" id="5572957"/>
<dbReference type="KEGG" id="aag:5572957"/>
<dbReference type="VEuPathDB" id="VectorBase:AAEL010172"/>
<dbReference type="eggNOG" id="ENOG502TMCQ">
    <property type="taxonomic scope" value="Eukaryota"/>
</dbReference>
<dbReference type="HOGENOM" id="CLU_1215651_0_0_1"/>
<dbReference type="InParanoid" id="O02036"/>
<dbReference type="OMA" id="GCEWTSR"/>
<dbReference type="OrthoDB" id="7756265at2759"/>
<dbReference type="PhylomeDB" id="O02036"/>
<dbReference type="Proteomes" id="UP000008820">
    <property type="component" value="Unassembled WGS sequence"/>
</dbReference>
<dbReference type="Proteomes" id="UP000682892">
    <property type="component" value="Unassembled WGS sequence"/>
</dbReference>
<dbReference type="GO" id="GO:0005576">
    <property type="term" value="C:extracellular region"/>
    <property type="evidence" value="ECO:0007669"/>
    <property type="project" value="UniProtKB-SubCell"/>
</dbReference>
<dbReference type="GO" id="GO:0007218">
    <property type="term" value="P:neuropeptide signaling pathway"/>
    <property type="evidence" value="ECO:0007669"/>
    <property type="project" value="UniProtKB-KW"/>
</dbReference>
<evidence type="ECO:0000255" key="1"/>
<evidence type="ECO:0000256" key="2">
    <source>
        <dbReference type="SAM" id="MobiDB-lite"/>
    </source>
</evidence>
<evidence type="ECO:0000269" key="3">
    <source>
    </source>
</evidence>
<evidence type="ECO:0000269" key="4">
    <source>
    </source>
</evidence>
<name>LCK_AEDAE</name>
<keyword id="KW-0027">Amidation</keyword>
<keyword id="KW-0165">Cleavage on pair of basic residues</keyword>
<keyword id="KW-0903">Direct protein sequencing</keyword>
<keyword id="KW-0527">Neuropeptide</keyword>
<keyword id="KW-1185">Reference proteome</keyword>
<keyword id="KW-0964">Secreted</keyword>
<keyword id="KW-0732">Signal</keyword>
<reference key="1">
    <citation type="journal article" date="1997" name="J. Biol. Chem.">
        <title>A single cDNA encodes all three Aedes leucokinins, which stimulate both fluid secretion by the Malpighian tubules and hindgut contractions.</title>
        <authorList>
            <person name="Veenstra J.A."/>
            <person name="Patillo J.M."/>
            <person name="Petzel D.H."/>
        </authorList>
    </citation>
    <scope>NUCLEOTIDE SEQUENCE [MRNA]</scope>
    <scope>FUNCTION</scope>
    <scope>SUBCELLULAR LOCATION</scope>
    <source>
        <tissue>Abdominal ganglion</tissue>
    </source>
</reference>
<reference key="2">
    <citation type="journal article" date="2007" name="Science">
        <title>Genome sequence of Aedes aegypti, a major arbovirus vector.</title>
        <authorList>
            <person name="Nene V."/>
            <person name="Wortman J.R."/>
            <person name="Lawson D."/>
            <person name="Haas B.J."/>
            <person name="Kodira C.D."/>
            <person name="Tu Z.J."/>
            <person name="Loftus B.J."/>
            <person name="Xi Z."/>
            <person name="Megy K."/>
            <person name="Grabherr M."/>
            <person name="Ren Q."/>
            <person name="Zdobnov E.M."/>
            <person name="Lobo N.F."/>
            <person name="Campbell K.S."/>
            <person name="Brown S.E."/>
            <person name="Bonaldo M.F."/>
            <person name="Zhu J."/>
            <person name="Sinkins S.P."/>
            <person name="Hogenkamp D.G."/>
            <person name="Amedeo P."/>
            <person name="Arensburger P."/>
            <person name="Atkinson P.W."/>
            <person name="Bidwell S.L."/>
            <person name="Biedler J."/>
            <person name="Birney E."/>
            <person name="Bruggner R.V."/>
            <person name="Costas J."/>
            <person name="Coy M.R."/>
            <person name="Crabtree J."/>
            <person name="Crawford M."/>
            <person name="DeBruyn B."/>
            <person name="DeCaprio D."/>
            <person name="Eiglmeier K."/>
            <person name="Eisenstadt E."/>
            <person name="El-Dorry H."/>
            <person name="Gelbart W.M."/>
            <person name="Gomes S.L."/>
            <person name="Hammond M."/>
            <person name="Hannick L.I."/>
            <person name="Hogan J.R."/>
            <person name="Holmes M.H."/>
            <person name="Jaffe D."/>
            <person name="Johnston S.J."/>
            <person name="Kennedy R.C."/>
            <person name="Koo H."/>
            <person name="Kravitz S."/>
            <person name="Kriventseva E.V."/>
            <person name="Kulp D."/>
            <person name="Labutti K."/>
            <person name="Lee E."/>
            <person name="Li S."/>
            <person name="Lovin D.D."/>
            <person name="Mao C."/>
            <person name="Mauceli E."/>
            <person name="Menck C.F."/>
            <person name="Miller J.R."/>
            <person name="Montgomery P."/>
            <person name="Mori A."/>
            <person name="Nascimento A.L."/>
            <person name="Naveira H.F."/>
            <person name="Nusbaum C."/>
            <person name="O'Leary S.B."/>
            <person name="Orvis J."/>
            <person name="Pertea M."/>
            <person name="Quesneville H."/>
            <person name="Reidenbach K.R."/>
            <person name="Rogers Y.-H.C."/>
            <person name="Roth C.W."/>
            <person name="Schneider J.R."/>
            <person name="Schatz M."/>
            <person name="Shumway M."/>
            <person name="Stanke M."/>
            <person name="Stinson E.O."/>
            <person name="Tubio J.M.C."/>
            <person name="Vanzee J.P."/>
            <person name="Verjovski-Almeida S."/>
            <person name="Werner D."/>
            <person name="White O.R."/>
            <person name="Wyder S."/>
            <person name="Zeng Q."/>
            <person name="Zhao Q."/>
            <person name="Zhao Y."/>
            <person name="Hill C.A."/>
            <person name="Raikhel A.S."/>
            <person name="Soares M.B."/>
            <person name="Knudson D.L."/>
            <person name="Lee N.H."/>
            <person name="Galagan J."/>
            <person name="Salzberg S.L."/>
            <person name="Paulsen I.T."/>
            <person name="Dimopoulos G."/>
            <person name="Collins F.H."/>
            <person name="Bruce B."/>
            <person name="Fraser-Liggett C.M."/>
            <person name="Severson D.W."/>
        </authorList>
    </citation>
    <scope>NUCLEOTIDE SEQUENCE [LARGE SCALE GENOMIC DNA]</scope>
    <source>
        <strain>LVPib12</strain>
    </source>
</reference>
<reference key="3">
    <citation type="journal article" date="1994" name="Biochem. Biophys. Res. Commun.">
        <title>Isolation and identification of three leucokinins from the mosquito Aedes aegypti.</title>
        <authorList>
            <person name="Veenstra J.A."/>
        </authorList>
    </citation>
    <scope>PARTIAL PROTEIN SEQUENCE (LEUCOKININS)</scope>
    <scope>AMIDATION AT GLY-180; GLY-193 AND GLY-217</scope>
</reference>
<protein>
    <recommendedName>
        <fullName>Leucokinins</fullName>
    </recommendedName>
    <component>
        <recommendedName>
            <fullName>Leucokinin-1</fullName>
        </recommendedName>
    </component>
    <component>
        <recommendedName>
            <fullName>Leucokinin-3</fullName>
        </recommendedName>
    </component>
    <component>
        <recommendedName>
            <fullName>Leucokinin-2</fullName>
        </recommendedName>
    </component>
</protein>
<feature type="signal peptide" evidence="1">
    <location>
        <begin position="1"/>
        <end position="18"/>
    </location>
</feature>
<feature type="propeptide" id="PRO_0000000940">
    <location>
        <begin position="19"/>
        <end position="164"/>
    </location>
</feature>
<feature type="peptide" id="PRO_0000000941" description="Leucokinin-1">
    <location>
        <begin position="167"/>
        <end position="180"/>
    </location>
</feature>
<feature type="peptide" id="PRO_0000000942" description="Leucokinin-3">
    <location>
        <begin position="184"/>
        <end position="193"/>
    </location>
</feature>
<feature type="propeptide" id="PRO_0000000943">
    <location>
        <begin position="197"/>
        <end position="209"/>
    </location>
</feature>
<feature type="peptide" id="PRO_0000000944" description="Leucokinin-2">
    <location>
        <begin position="211"/>
        <end position="217"/>
    </location>
</feature>
<feature type="propeptide" id="PRO_0000000945">
    <location>
        <begin position="221"/>
        <end position="228"/>
    </location>
</feature>
<feature type="region of interest" description="Disordered" evidence="2">
    <location>
        <begin position="80"/>
        <end position="118"/>
    </location>
</feature>
<feature type="modified residue" description="Glycine amide" evidence="3">
    <location>
        <position position="180"/>
    </location>
</feature>
<feature type="modified residue" description="Glycine amide" evidence="3">
    <location>
        <position position="193"/>
    </location>
</feature>
<feature type="modified residue" description="Glycine amide" evidence="3">
    <location>
        <position position="217"/>
    </location>
</feature>
<accession>O02036</accession>
<accession>Q16TP4</accession>